<comment type="function">
    <text evidence="1">Heme chaperone required for the biogenesis of c-type cytochromes. Transiently binds heme delivered by CcmC and transfers the heme to apo-cytochromes in a process facilitated by CcmF and CcmH.</text>
</comment>
<comment type="subcellular location">
    <subcellularLocation>
        <location evidence="1">Cell inner membrane</location>
        <topology evidence="1">Single-pass type II membrane protein</topology>
        <orientation evidence="1">Periplasmic side</orientation>
    </subcellularLocation>
</comment>
<comment type="similarity">
    <text evidence="1">Belongs to the CcmE/CycJ family.</text>
</comment>
<sequence>MTRKQKRLAVIGSGMGFLALAAALTFYALGQQTSYFYMPSDLLSQPAAAQERIRLGGLVQQGSVERGQGTHVSFVVADGQNGVPVVYDGILPDLFREEQGVVIEGRMGPDGVFVADTVLAKHDETYMPREVADRLKKDGLWQEQ</sequence>
<accession>Q11JY0</accession>
<organism>
    <name type="scientific">Chelativorans sp. (strain BNC1)</name>
    <dbReference type="NCBI Taxonomy" id="266779"/>
    <lineage>
        <taxon>Bacteria</taxon>
        <taxon>Pseudomonadati</taxon>
        <taxon>Pseudomonadota</taxon>
        <taxon>Alphaproteobacteria</taxon>
        <taxon>Hyphomicrobiales</taxon>
        <taxon>Phyllobacteriaceae</taxon>
        <taxon>Chelativorans</taxon>
    </lineage>
</organism>
<evidence type="ECO:0000255" key="1">
    <source>
        <dbReference type="HAMAP-Rule" id="MF_01959"/>
    </source>
</evidence>
<gene>
    <name evidence="1" type="primary">ccmE</name>
    <name evidence="1" type="synonym">cycJ</name>
    <name type="ordered locus">Meso_0898</name>
</gene>
<proteinExistence type="inferred from homology"/>
<feature type="chain" id="PRO_1000189030" description="Cytochrome c-type biogenesis protein CcmE">
    <location>
        <begin position="1"/>
        <end position="144"/>
    </location>
</feature>
<feature type="topological domain" description="Cytoplasmic" evidence="1">
    <location>
        <begin position="1"/>
        <end position="7"/>
    </location>
</feature>
<feature type="transmembrane region" description="Helical; Signal-anchor for type II membrane protein" evidence="1">
    <location>
        <begin position="8"/>
        <end position="28"/>
    </location>
</feature>
<feature type="topological domain" description="Periplasmic" evidence="1">
    <location>
        <begin position="29"/>
        <end position="144"/>
    </location>
</feature>
<feature type="binding site" description="covalent" evidence="1">
    <location>
        <position position="122"/>
    </location>
    <ligand>
        <name>heme</name>
        <dbReference type="ChEBI" id="CHEBI:30413"/>
    </ligand>
</feature>
<feature type="binding site" description="axial binding residue" evidence="1">
    <location>
        <position position="126"/>
    </location>
    <ligand>
        <name>heme</name>
        <dbReference type="ChEBI" id="CHEBI:30413"/>
    </ligand>
    <ligandPart>
        <name>Fe</name>
        <dbReference type="ChEBI" id="CHEBI:18248"/>
    </ligandPart>
</feature>
<dbReference type="EMBL" id="CP000390">
    <property type="protein sequence ID" value="ABG62295.1"/>
    <property type="molecule type" value="Genomic_DNA"/>
</dbReference>
<dbReference type="SMR" id="Q11JY0"/>
<dbReference type="STRING" id="266779.Meso_0898"/>
<dbReference type="KEGG" id="mes:Meso_0898"/>
<dbReference type="eggNOG" id="COG2332">
    <property type="taxonomic scope" value="Bacteria"/>
</dbReference>
<dbReference type="HOGENOM" id="CLU_079503_1_1_5"/>
<dbReference type="OrthoDB" id="9793584at2"/>
<dbReference type="GO" id="GO:0005886">
    <property type="term" value="C:plasma membrane"/>
    <property type="evidence" value="ECO:0007669"/>
    <property type="project" value="UniProtKB-SubCell"/>
</dbReference>
<dbReference type="GO" id="GO:0020037">
    <property type="term" value="F:heme binding"/>
    <property type="evidence" value="ECO:0007669"/>
    <property type="project" value="InterPro"/>
</dbReference>
<dbReference type="GO" id="GO:0046872">
    <property type="term" value="F:metal ion binding"/>
    <property type="evidence" value="ECO:0007669"/>
    <property type="project" value="UniProtKB-KW"/>
</dbReference>
<dbReference type="GO" id="GO:0017004">
    <property type="term" value="P:cytochrome complex assembly"/>
    <property type="evidence" value="ECO:0007669"/>
    <property type="project" value="UniProtKB-KW"/>
</dbReference>
<dbReference type="Gene3D" id="2.40.50.140">
    <property type="entry name" value="Nucleic acid-binding proteins"/>
    <property type="match status" value="1"/>
</dbReference>
<dbReference type="HAMAP" id="MF_01959">
    <property type="entry name" value="CcmE"/>
    <property type="match status" value="1"/>
</dbReference>
<dbReference type="InterPro" id="IPR004329">
    <property type="entry name" value="CcmE"/>
</dbReference>
<dbReference type="InterPro" id="IPR036127">
    <property type="entry name" value="CcmE-like_sf"/>
</dbReference>
<dbReference type="InterPro" id="IPR012340">
    <property type="entry name" value="NA-bd_OB-fold"/>
</dbReference>
<dbReference type="NCBIfam" id="NF009727">
    <property type="entry name" value="PRK13254.1-1"/>
    <property type="match status" value="1"/>
</dbReference>
<dbReference type="NCBIfam" id="NF009731">
    <property type="entry name" value="PRK13254.1-5"/>
    <property type="match status" value="1"/>
</dbReference>
<dbReference type="PANTHER" id="PTHR34128">
    <property type="entry name" value="CYTOCHROME C-TYPE BIOGENESIS PROTEIN CCME HOMOLOG, MITOCHONDRIAL"/>
    <property type="match status" value="1"/>
</dbReference>
<dbReference type="PANTHER" id="PTHR34128:SF2">
    <property type="entry name" value="CYTOCHROME C-TYPE BIOGENESIS PROTEIN CCME HOMOLOG, MITOCHONDRIAL"/>
    <property type="match status" value="1"/>
</dbReference>
<dbReference type="Pfam" id="PF03100">
    <property type="entry name" value="CcmE"/>
    <property type="match status" value="1"/>
</dbReference>
<dbReference type="SUPFAM" id="SSF82093">
    <property type="entry name" value="Heme chaperone CcmE"/>
    <property type="match status" value="1"/>
</dbReference>
<name>CCME_CHESB</name>
<reference key="1">
    <citation type="submission" date="2006-06" db="EMBL/GenBank/DDBJ databases">
        <title>Complete sequence of chromosome of Mesorhizobium sp. BNC1.</title>
        <authorList>
            <consortium name="US DOE Joint Genome Institute"/>
            <person name="Copeland A."/>
            <person name="Lucas S."/>
            <person name="Lapidus A."/>
            <person name="Barry K."/>
            <person name="Detter J.C."/>
            <person name="Glavina del Rio T."/>
            <person name="Hammon N."/>
            <person name="Israni S."/>
            <person name="Dalin E."/>
            <person name="Tice H."/>
            <person name="Pitluck S."/>
            <person name="Chertkov O."/>
            <person name="Brettin T."/>
            <person name="Bruce D."/>
            <person name="Han C."/>
            <person name="Tapia R."/>
            <person name="Gilna P."/>
            <person name="Schmutz J."/>
            <person name="Larimer F."/>
            <person name="Land M."/>
            <person name="Hauser L."/>
            <person name="Kyrpides N."/>
            <person name="Mikhailova N."/>
            <person name="Richardson P."/>
        </authorList>
    </citation>
    <scope>NUCLEOTIDE SEQUENCE [LARGE SCALE GENOMIC DNA]</scope>
    <source>
        <strain>BNC1</strain>
    </source>
</reference>
<protein>
    <recommendedName>
        <fullName evidence="1">Cytochrome c-type biogenesis protein CcmE</fullName>
    </recommendedName>
    <alternativeName>
        <fullName evidence="1">Cytochrome c maturation protein E</fullName>
    </alternativeName>
    <alternativeName>
        <fullName evidence="1">Heme chaperone CcmE</fullName>
    </alternativeName>
</protein>
<keyword id="KW-0997">Cell inner membrane</keyword>
<keyword id="KW-1003">Cell membrane</keyword>
<keyword id="KW-0201">Cytochrome c-type biogenesis</keyword>
<keyword id="KW-0349">Heme</keyword>
<keyword id="KW-0408">Iron</keyword>
<keyword id="KW-0472">Membrane</keyword>
<keyword id="KW-0479">Metal-binding</keyword>
<keyword id="KW-0735">Signal-anchor</keyword>
<keyword id="KW-0812">Transmembrane</keyword>
<keyword id="KW-1133">Transmembrane helix</keyword>